<evidence type="ECO:0000250" key="1">
    <source>
        <dbReference type="UniProtKB" id="Q65YW8"/>
    </source>
</evidence>
<evidence type="ECO:0000250" key="2">
    <source>
        <dbReference type="UniProtKB" id="Q65Z91"/>
    </source>
</evidence>
<evidence type="ECO:0000250" key="3">
    <source>
        <dbReference type="UniProtKB" id="Q8WUA8"/>
    </source>
</evidence>
<evidence type="ECO:0000255" key="4"/>
<reference key="1">
    <citation type="submission" date="2004-12" db="EMBL/GenBank/DDBJ databases">
        <authorList>
            <consortium name="NIH - Xenopus Gene Collection (XGC) project"/>
        </authorList>
    </citation>
    <scope>NUCLEOTIDE SEQUENCE [LARGE SCALE MRNA]</scope>
    <source>
        <tissue>Embryo</tissue>
    </source>
</reference>
<dbReference type="EMBL" id="BC088476">
    <property type="protein sequence ID" value="AAH88476.1"/>
    <property type="molecule type" value="mRNA"/>
</dbReference>
<dbReference type="RefSeq" id="NP_001011330.1">
    <property type="nucleotide sequence ID" value="NM_001011330.1"/>
</dbReference>
<dbReference type="SMR" id="Q5M7S9"/>
<dbReference type="FunCoup" id="Q5M7S9">
    <property type="interactions" value="176"/>
</dbReference>
<dbReference type="STRING" id="8364.ENSXETP00000003192"/>
<dbReference type="GlyCosmos" id="Q5M7S9">
    <property type="glycosylation" value="2 sites, No reported glycans"/>
</dbReference>
<dbReference type="PaxDb" id="8364-ENSXETP00000042141"/>
<dbReference type="DNASU" id="496792"/>
<dbReference type="GeneID" id="496792"/>
<dbReference type="KEGG" id="xtr:496792"/>
<dbReference type="AGR" id="Xenbase:XB-GENE-493206"/>
<dbReference type="CTD" id="25987"/>
<dbReference type="Xenbase" id="XB-GENE-493206">
    <property type="gene designation" value="tsku"/>
</dbReference>
<dbReference type="eggNOG" id="KOG0619">
    <property type="taxonomic scope" value="Eukaryota"/>
</dbReference>
<dbReference type="HOGENOM" id="CLU_785168_0_0_1"/>
<dbReference type="InParanoid" id="Q5M7S9"/>
<dbReference type="OMA" id="CIDTQEP"/>
<dbReference type="OrthoDB" id="676979at2759"/>
<dbReference type="PhylomeDB" id="Q5M7S9"/>
<dbReference type="Proteomes" id="UP000008143">
    <property type="component" value="Chromosome 2"/>
</dbReference>
<dbReference type="ExpressionAtlas" id="Q5M7S9">
    <property type="expression patterns" value="baseline and differential"/>
</dbReference>
<dbReference type="GO" id="GO:0005615">
    <property type="term" value="C:extracellular space"/>
    <property type="evidence" value="ECO:0000250"/>
    <property type="project" value="UniProtKB"/>
</dbReference>
<dbReference type="GO" id="GO:0098868">
    <property type="term" value="P:bone growth"/>
    <property type="evidence" value="ECO:0000250"/>
    <property type="project" value="UniProtKB"/>
</dbReference>
<dbReference type="GO" id="GO:0097009">
    <property type="term" value="P:energy homeostasis"/>
    <property type="evidence" value="ECO:0000250"/>
    <property type="project" value="UniProtKB"/>
</dbReference>
<dbReference type="GO" id="GO:0003431">
    <property type="term" value="P:growth plate cartilage chondrocyte development"/>
    <property type="evidence" value="ECO:0000250"/>
    <property type="project" value="UniProtKB"/>
</dbReference>
<dbReference type="GO" id="GO:0007399">
    <property type="term" value="P:nervous system development"/>
    <property type="evidence" value="ECO:0007669"/>
    <property type="project" value="UniProtKB-KW"/>
</dbReference>
<dbReference type="Gene3D" id="3.80.10.10">
    <property type="entry name" value="Ribonuclease Inhibitor"/>
    <property type="match status" value="2"/>
</dbReference>
<dbReference type="InterPro" id="IPR050328">
    <property type="entry name" value="Dev_Immune_Receptor"/>
</dbReference>
<dbReference type="InterPro" id="IPR001611">
    <property type="entry name" value="Leu-rich_rpt"/>
</dbReference>
<dbReference type="InterPro" id="IPR003591">
    <property type="entry name" value="Leu-rich_rpt_typical-subtyp"/>
</dbReference>
<dbReference type="InterPro" id="IPR032675">
    <property type="entry name" value="LRR_dom_sf"/>
</dbReference>
<dbReference type="PANTHER" id="PTHR24373:SF370">
    <property type="entry name" value="FISH-LIPS, ISOFORM E"/>
    <property type="match status" value="1"/>
</dbReference>
<dbReference type="PANTHER" id="PTHR24373">
    <property type="entry name" value="SLIT RELATED LEUCINE-RICH REPEAT NEURONAL PROTEIN"/>
    <property type="match status" value="1"/>
</dbReference>
<dbReference type="Pfam" id="PF13855">
    <property type="entry name" value="LRR_8"/>
    <property type="match status" value="2"/>
</dbReference>
<dbReference type="PRINTS" id="PR00019">
    <property type="entry name" value="LEURICHRPT"/>
</dbReference>
<dbReference type="SMART" id="SM00369">
    <property type="entry name" value="LRR_TYP"/>
    <property type="match status" value="8"/>
</dbReference>
<dbReference type="SUPFAM" id="SSF52058">
    <property type="entry name" value="L domain-like"/>
    <property type="match status" value="1"/>
</dbReference>
<dbReference type="PROSITE" id="PS51450">
    <property type="entry name" value="LRR"/>
    <property type="match status" value="9"/>
</dbReference>
<protein>
    <recommendedName>
        <fullName evidence="3">Tsukushi</fullName>
    </recommendedName>
    <alternativeName>
        <fullName>Leucine-rich repeat-containing protein 54</fullName>
    </alternativeName>
</protein>
<gene>
    <name type="primary">tsku</name>
    <name type="synonym">lrcc54</name>
    <name type="synonym">tsk</name>
</gene>
<comment type="function">
    <text evidence="1">Contributes to various developmental events through its interactions with multiple signaling pathways. Dorsalizing factor which functions as an inhibitor of bone morphogenetic proteins (BMP) during gastrulation. Promotes dll1-dependent activation of Notch signaling and is required for neural crest formation. Induces endoderm and dorsal mesoderm formation by enhancing nodal2/Xnr2 activity while inhibiting ventrolateral mesoderm formation through inhibition of fgf8.</text>
</comment>
<comment type="subunit">
    <text evidence="1">Interacts with bmp4. Interacts with dll1 (via extracellular region). Interacts with fgf8; inhibits fgf8 signaling. Interacts with nodal2/Xnr2; enhances nodal2 activity.</text>
</comment>
<comment type="subcellular location">
    <subcellularLocation>
        <location evidence="2">Secreted</location>
    </subcellularLocation>
</comment>
<comment type="miscellaneous">
    <text evidence="2">This factor is named 'Tsukushi' because its expression pattern in chick embryos is similar to the shape of the Japanese horsetail plant, tsukushi.</text>
</comment>
<feature type="signal peptide" evidence="4">
    <location>
        <begin position="1"/>
        <end position="17"/>
    </location>
</feature>
<feature type="chain" id="PRO_0000240412" description="Tsukushi">
    <location>
        <begin position="18"/>
        <end position="350"/>
    </location>
</feature>
<feature type="domain" description="LRRNT">
    <location>
        <begin position="18"/>
        <end position="59"/>
    </location>
</feature>
<feature type="repeat" description="LRR 1">
    <location>
        <begin position="60"/>
        <end position="81"/>
    </location>
</feature>
<feature type="repeat" description="LRR 2">
    <location>
        <begin position="86"/>
        <end position="107"/>
    </location>
</feature>
<feature type="repeat" description="LRR 3">
    <location>
        <begin position="110"/>
        <end position="131"/>
    </location>
</feature>
<feature type="repeat" description="LRR 4">
    <location>
        <begin position="133"/>
        <end position="154"/>
    </location>
</feature>
<feature type="repeat" description="LRR 5">
    <location>
        <begin position="159"/>
        <end position="180"/>
    </location>
</feature>
<feature type="repeat" description="LRR 6">
    <location>
        <begin position="183"/>
        <end position="203"/>
    </location>
</feature>
<feature type="repeat" description="LRR 7">
    <location>
        <begin position="204"/>
        <end position="225"/>
    </location>
</feature>
<feature type="repeat" description="LRR 8">
    <location>
        <begin position="228"/>
        <end position="250"/>
    </location>
</feature>
<feature type="repeat" description="LRR 9">
    <location>
        <begin position="253"/>
        <end position="275"/>
    </location>
</feature>
<feature type="repeat" description="LRR 10">
    <location>
        <begin position="278"/>
        <end position="299"/>
    </location>
</feature>
<feature type="glycosylation site" description="N-linked (GlcNAc...) asparagine" evidence="4">
    <location>
        <position position="75"/>
    </location>
</feature>
<feature type="glycosylation site" description="N-linked (GlcNAc...) asparagine" evidence="4">
    <location>
        <position position="91"/>
    </location>
</feature>
<accession>Q5M7S9</accession>
<proteinExistence type="evidence at transcript level"/>
<keyword id="KW-0217">Developmental protein</keyword>
<keyword id="KW-0325">Glycoprotein</keyword>
<keyword id="KW-0433">Leucine-rich repeat</keyword>
<keyword id="KW-0524">Neurogenesis</keyword>
<keyword id="KW-1185">Reference proteome</keyword>
<keyword id="KW-0677">Repeat</keyword>
<keyword id="KW-0964">Secreted</keyword>
<keyword id="KW-0732">Signal</keyword>
<sequence length="350" mass="38444">MAPSWLFLLFIPGMVGSSRSCFPGCQCIVDNFGLFHSFSLTKVDCSGVGPHVVPVSIPLDTSYLDLSANGIKRINESVLSGPGYTTLINLNLSHNQIVRISFSTFSKLRYLESLDLSHNLLETLPDGSFLYSRLTELDLSSNKLLEVGIGAFTLKSQGRSMTINLGNNNIRSIHRGAERPVPNIHSLTLSGNDLLSVPDLHGIPLRHLDLDRNPLAKIEKESFLGLEGLTHLSLSDLPNLREVSPYSFKTLPSLLDLDLSSNPQLKSLSSDMFFGLDSLQELNLAYSGVAALPKDIMLNLPSMKSITWGENIRCSKTVKESPFHAQKGRVREEVLLCHDDYGAVPAQDVL</sequence>
<organism>
    <name type="scientific">Xenopus tropicalis</name>
    <name type="common">Western clawed frog</name>
    <name type="synonym">Silurana tropicalis</name>
    <dbReference type="NCBI Taxonomy" id="8364"/>
    <lineage>
        <taxon>Eukaryota</taxon>
        <taxon>Metazoa</taxon>
        <taxon>Chordata</taxon>
        <taxon>Craniata</taxon>
        <taxon>Vertebrata</taxon>
        <taxon>Euteleostomi</taxon>
        <taxon>Amphibia</taxon>
        <taxon>Batrachia</taxon>
        <taxon>Anura</taxon>
        <taxon>Pipoidea</taxon>
        <taxon>Pipidae</taxon>
        <taxon>Xenopodinae</taxon>
        <taxon>Xenopus</taxon>
        <taxon>Silurana</taxon>
    </lineage>
</organism>
<name>TSK_XENTR</name>